<name>ALG8_KLULA</name>
<comment type="function">
    <text evidence="1">Dolichyl pyrophosphate Glc1Man9GlcNAc2 alpha-1,3-glucosyltransferase that operates in the biosynthetic pathway of dolichol-linked oligosaccharides, the glycan precursors employed in protein asparagine (N)-glycosylation. The assembly of dolichol-linked oligosaccharides begins on the cytosolic side of the endoplasmic reticulum membrane and finishes in its lumen. The sequential addition of sugars to dolichol pyrophosphate produces dolichol-linked oligosaccharides containing fourteen sugars, including two GlcNAcs, nine mannoses and three glucoses. Once assembled, the oligosaccharide is transferred from the lipid to nascent proteins by oligosaccharyltransferases. In the lumen of the endoplasmic reticulum, adds the second glucose residue from dolichyl phosphate glucose (Dol-P-Glc) onto the lipid-linked oligosaccharide intermediate Glc(1)Man(9)GlcNAc(2)-PP-Dol to produce Glc(2)Man(9)GlcNAc(2)-PP-Dol.</text>
</comment>
<comment type="catalytic activity">
    <reaction evidence="1">
        <text>an alpha-D-Glc-(1-&gt;3)-alpha-D-Man-(1-&gt;2)-alpha-D-Man-(1-&gt;2)-alpha-D-Man-(1-&gt;3)-[alpha-D-Man-(1-&gt;2)-alpha-D-Man-(1-&gt;3)-[alpha-D-Man-(1-&gt;2)-alpha-D-Man-(1-&gt;6)]-alpha-D-Man-(1-&gt;6)]-beta-D-Man-(1-&gt;4)-beta-D-GlcNAc-(1-&gt;4)-alpha-D-GlcNAc-diphospho-di-trans,poly-cis-dolichol + a di-trans,poly-cis-dolichyl beta-D-glucosyl phosphate = an alpha-D-Glc-(1-&gt;3)-alpha-D-Glc-(1-&gt;3)-alpha-D-Man-(1-&gt;2)-alpha-D-Man-(1-&gt;2)-alpha-D-Man-(1-&gt;3)-[alpha-D-Man-(1-&gt;2)-alpha-D-Man-(1-&gt;3)-[alpha-D-Man-(1-&gt;2)-alpha-D-Man-(1-&gt;6)]-alpha-D-Man-(1-&gt;6)]-beta-D-Man-(1-&gt;4)-beta-D-GlcNAc-(1-&gt;4)-alpha-D-GlcNAc-diphospho-di-trans,poly-cis-dolichol + a di-trans,poly-cis-dolichyl phosphate + H(+)</text>
        <dbReference type="Rhea" id="RHEA:31307"/>
        <dbReference type="Rhea" id="RHEA-COMP:19498"/>
        <dbReference type="Rhea" id="RHEA-COMP:19502"/>
        <dbReference type="Rhea" id="RHEA-COMP:19521"/>
        <dbReference type="Rhea" id="RHEA-COMP:19522"/>
        <dbReference type="ChEBI" id="CHEBI:15378"/>
        <dbReference type="ChEBI" id="CHEBI:57525"/>
        <dbReference type="ChEBI" id="CHEBI:57683"/>
        <dbReference type="ChEBI" id="CHEBI:132521"/>
        <dbReference type="ChEBI" id="CHEBI:132522"/>
        <dbReference type="EC" id="2.4.1.265"/>
    </reaction>
    <physiologicalReaction direction="left-to-right" evidence="1">
        <dbReference type="Rhea" id="RHEA:31308"/>
    </physiologicalReaction>
</comment>
<comment type="pathway">
    <text evidence="1">Protein modification; protein glycosylation.</text>
</comment>
<comment type="subcellular location">
    <subcellularLocation>
        <location evidence="1">Endoplasmic reticulum membrane</location>
        <topology evidence="2">Multi-pass membrane protein</topology>
    </subcellularLocation>
</comment>
<comment type="similarity">
    <text evidence="3">Belongs to the ALG6/ALG8 glucosyltransferase family.</text>
</comment>
<evidence type="ECO:0000250" key="1">
    <source>
        <dbReference type="UniProtKB" id="P40351"/>
    </source>
</evidence>
<evidence type="ECO:0000255" key="2"/>
<evidence type="ECO:0000305" key="3"/>
<dbReference type="EC" id="2.4.1.265" evidence="1"/>
<dbReference type="EMBL" id="CR382126">
    <property type="protein sequence ID" value="CAG98535.1"/>
    <property type="molecule type" value="Genomic_DNA"/>
</dbReference>
<dbReference type="RefSeq" id="XP_455827.1">
    <property type="nucleotide sequence ID" value="XM_455827.1"/>
</dbReference>
<dbReference type="SMR" id="Q6CJR2"/>
<dbReference type="FunCoup" id="Q6CJR2">
    <property type="interactions" value="821"/>
</dbReference>
<dbReference type="STRING" id="284590.Q6CJR2"/>
<dbReference type="CAZy" id="GT57">
    <property type="family name" value="Glycosyltransferase Family 57"/>
</dbReference>
<dbReference type="PaxDb" id="284590-Q6CJR2"/>
<dbReference type="KEGG" id="kla:KLLA0_F16621g"/>
<dbReference type="eggNOG" id="KOG2576">
    <property type="taxonomic scope" value="Eukaryota"/>
</dbReference>
<dbReference type="HOGENOM" id="CLU_022045_1_1_1"/>
<dbReference type="InParanoid" id="Q6CJR2"/>
<dbReference type="OMA" id="YHSTDFD"/>
<dbReference type="UniPathway" id="UPA00378"/>
<dbReference type="Proteomes" id="UP000000598">
    <property type="component" value="Chromosome F"/>
</dbReference>
<dbReference type="GO" id="GO:0005789">
    <property type="term" value="C:endoplasmic reticulum membrane"/>
    <property type="evidence" value="ECO:0000250"/>
    <property type="project" value="UniProtKB"/>
</dbReference>
<dbReference type="GO" id="GO:0042283">
    <property type="term" value="F:dolichyl pyrophosphate Glc1Man9GlcNAc2 alpha-1,3-glucosyltransferase activity"/>
    <property type="evidence" value="ECO:0000250"/>
    <property type="project" value="UniProtKB"/>
</dbReference>
<dbReference type="GO" id="GO:0006488">
    <property type="term" value="P:dolichol-linked oligosaccharide biosynthetic process"/>
    <property type="evidence" value="ECO:0000250"/>
    <property type="project" value="UniProtKB"/>
</dbReference>
<dbReference type="GO" id="GO:0006487">
    <property type="term" value="P:protein N-linked glycosylation"/>
    <property type="evidence" value="ECO:0000250"/>
    <property type="project" value="UniProtKB"/>
</dbReference>
<dbReference type="InterPro" id="IPR004856">
    <property type="entry name" value="Glyco_trans_ALG6/ALG8"/>
</dbReference>
<dbReference type="PANTHER" id="PTHR12413">
    <property type="entry name" value="DOLICHYL GLYCOSYLTRANSFERASE"/>
    <property type="match status" value="1"/>
</dbReference>
<dbReference type="PANTHER" id="PTHR12413:SF2">
    <property type="entry name" value="DOLICHYL PYROPHOSPHATE GLC1MAN9GLCNAC2 ALPHA-1,3-GLUCOSYLTRANSFERASE-RELATED"/>
    <property type="match status" value="1"/>
</dbReference>
<dbReference type="Pfam" id="PF03155">
    <property type="entry name" value="Alg6_Alg8"/>
    <property type="match status" value="1"/>
</dbReference>
<proteinExistence type="inferred from homology"/>
<feature type="chain" id="PRO_0000278335" description="Dolichyl pyrophosphate Glc1Man9GlcNAc2 alpha-1,3-glucosyltransferase">
    <location>
        <begin position="1"/>
        <end position="561"/>
    </location>
</feature>
<feature type="topological domain" description="Lumenal" evidence="2">
    <location>
        <begin position="1"/>
        <end position="27"/>
    </location>
</feature>
<feature type="transmembrane region" description="Helical" evidence="2">
    <location>
        <begin position="28"/>
        <end position="48"/>
    </location>
</feature>
<feature type="topological domain" description="Cytoplasmic" evidence="2">
    <location>
        <begin position="49"/>
        <end position="125"/>
    </location>
</feature>
<feature type="transmembrane region" description="Helical" evidence="2">
    <location>
        <begin position="126"/>
        <end position="146"/>
    </location>
</feature>
<feature type="topological domain" description="Lumenal" evidence="2">
    <location>
        <begin position="147"/>
        <end position="154"/>
    </location>
</feature>
<feature type="transmembrane region" description="Helical" evidence="2">
    <location>
        <begin position="155"/>
        <end position="175"/>
    </location>
</feature>
<feature type="topological domain" description="Cytoplasmic" evidence="2">
    <location>
        <begin position="176"/>
        <end position="205"/>
    </location>
</feature>
<feature type="transmembrane region" description="Helical" evidence="2">
    <location>
        <begin position="206"/>
        <end position="226"/>
    </location>
</feature>
<feature type="topological domain" description="Lumenal" evidence="2">
    <location>
        <begin position="227"/>
        <end position="252"/>
    </location>
</feature>
<feature type="transmembrane region" description="Helical" evidence="2">
    <location>
        <begin position="253"/>
        <end position="273"/>
    </location>
</feature>
<feature type="topological domain" description="Cytoplasmic" evidence="2">
    <location>
        <begin position="274"/>
        <end position="366"/>
    </location>
</feature>
<feature type="transmembrane region" description="Helical" evidence="2">
    <location>
        <begin position="367"/>
        <end position="387"/>
    </location>
</feature>
<feature type="topological domain" description="Lumenal" evidence="2">
    <location>
        <begin position="388"/>
        <end position="391"/>
    </location>
</feature>
<feature type="transmembrane region" description="Helical" evidence="2">
    <location>
        <begin position="392"/>
        <end position="411"/>
    </location>
</feature>
<feature type="topological domain" description="Cytoplasmic" evidence="2">
    <location>
        <begin position="412"/>
        <end position="431"/>
    </location>
</feature>
<feature type="transmembrane region" description="Helical" evidence="2">
    <location>
        <begin position="432"/>
        <end position="452"/>
    </location>
</feature>
<feature type="topological domain" description="Lumenal" evidence="2">
    <location>
        <begin position="453"/>
        <end position="456"/>
    </location>
</feature>
<feature type="transmembrane region" description="Helical" evidence="2">
    <location>
        <begin position="457"/>
        <end position="477"/>
    </location>
</feature>
<feature type="topological domain" description="Cytoplasmic" evidence="2">
    <location>
        <begin position="478"/>
        <end position="494"/>
    </location>
</feature>
<feature type="transmembrane region" description="Helical" evidence="2">
    <location>
        <begin position="495"/>
        <end position="515"/>
    </location>
</feature>
<feature type="topological domain" description="Lumenal" evidence="2">
    <location>
        <begin position="516"/>
        <end position="527"/>
    </location>
</feature>
<feature type="transmembrane region" description="Helical" evidence="2">
    <location>
        <begin position="528"/>
        <end position="548"/>
    </location>
</feature>
<feature type="topological domain" description="Cytoplasmic" evidence="2">
    <location>
        <begin position="549"/>
        <end position="561"/>
    </location>
</feature>
<sequence>MAKSDAKVSQGKRNSAPNAINNVKTRRYSLWNFWICATVLKVLLFPGYYSTDFDVHRNWLAITNKLPLNKWYVESTSQWTLDYPPFFAYFEWFLSQFVPKSVAEDGCLDIVKVGSFGLPTIIFQRITVILSELVLYAALQVFINTSDISEKSANFVVASSIVLSPGLLIVDHIHFQYNGFLFGILISSIVAAKNKRYILCAAFFSIALCFKHIFLYLAPAYFVFLLRAYVLDFSSFKFRSYKDLISIVQWSNLLKLASVVMGIFSLAFLPFITTWQQLLARLFPFSRGLTHAYWAPNVWAVYSFTDKVLTVLVLKLPYLQKILSIVLTSMPKTAADIHVRIESNNSGTRGLVQDVFFVVLPQITPKLTFLLTLFYQILAVVPVLFDPSFKRFVGSLTLCGFVSFLFGWHVHEKAIMLVIFPFSFLVPFDRRLLTPFTLLASAGYVSLFPLLYESQDFLLKFLYTFIWCILYFYAMGQTSKVNRSGVRRIFFFDRLAICYYLLLIPMVLFVQALDVLKHKYAALDKYEFLGLMIYSIYCSIGVLSSWIGLSWLFNFDEPMWN</sequence>
<accession>Q6CJR2</accession>
<keyword id="KW-0256">Endoplasmic reticulum</keyword>
<keyword id="KW-0328">Glycosyltransferase</keyword>
<keyword id="KW-0472">Membrane</keyword>
<keyword id="KW-1185">Reference proteome</keyword>
<keyword id="KW-0808">Transferase</keyword>
<keyword id="KW-0812">Transmembrane</keyword>
<keyword id="KW-1133">Transmembrane helix</keyword>
<protein>
    <recommendedName>
        <fullName evidence="1">Dolichyl pyrophosphate Glc1Man9GlcNAc2 alpha-1,3-glucosyltransferase</fullName>
        <ecNumber evidence="1">2.4.1.265</ecNumber>
    </recommendedName>
    <alternativeName>
        <fullName>Asparagine-linked glycosylation protein 8</fullName>
    </alternativeName>
    <alternativeName>
        <fullName>Dol-P-Glc:Glc(1)Man(9)GlcNAc(2)-PP-dolichyl alpha-1,3-glucosyltransferase</fullName>
    </alternativeName>
    <alternativeName>
        <fullName>Dolichyl-P-Glc:Glc1Man9GlcNAc2-PP-dolichyl glucosyltransferase</fullName>
    </alternativeName>
</protein>
<organism>
    <name type="scientific">Kluyveromyces lactis (strain ATCC 8585 / CBS 2359 / DSM 70799 / NBRC 1267 / NRRL Y-1140 / WM37)</name>
    <name type="common">Yeast</name>
    <name type="synonym">Candida sphaerica</name>
    <dbReference type="NCBI Taxonomy" id="284590"/>
    <lineage>
        <taxon>Eukaryota</taxon>
        <taxon>Fungi</taxon>
        <taxon>Dikarya</taxon>
        <taxon>Ascomycota</taxon>
        <taxon>Saccharomycotina</taxon>
        <taxon>Saccharomycetes</taxon>
        <taxon>Saccharomycetales</taxon>
        <taxon>Saccharomycetaceae</taxon>
        <taxon>Kluyveromyces</taxon>
    </lineage>
</organism>
<gene>
    <name type="primary">ALG8</name>
    <name type="ordered locus">KLLA0F16621g</name>
</gene>
<reference key="1">
    <citation type="journal article" date="2004" name="Nature">
        <title>Genome evolution in yeasts.</title>
        <authorList>
            <person name="Dujon B."/>
            <person name="Sherman D."/>
            <person name="Fischer G."/>
            <person name="Durrens P."/>
            <person name="Casaregola S."/>
            <person name="Lafontaine I."/>
            <person name="de Montigny J."/>
            <person name="Marck C."/>
            <person name="Neuveglise C."/>
            <person name="Talla E."/>
            <person name="Goffard N."/>
            <person name="Frangeul L."/>
            <person name="Aigle M."/>
            <person name="Anthouard V."/>
            <person name="Babour A."/>
            <person name="Barbe V."/>
            <person name="Barnay S."/>
            <person name="Blanchin S."/>
            <person name="Beckerich J.-M."/>
            <person name="Beyne E."/>
            <person name="Bleykasten C."/>
            <person name="Boisrame A."/>
            <person name="Boyer J."/>
            <person name="Cattolico L."/>
            <person name="Confanioleri F."/>
            <person name="de Daruvar A."/>
            <person name="Despons L."/>
            <person name="Fabre E."/>
            <person name="Fairhead C."/>
            <person name="Ferry-Dumazet H."/>
            <person name="Groppi A."/>
            <person name="Hantraye F."/>
            <person name="Hennequin C."/>
            <person name="Jauniaux N."/>
            <person name="Joyet P."/>
            <person name="Kachouri R."/>
            <person name="Kerrest A."/>
            <person name="Koszul R."/>
            <person name="Lemaire M."/>
            <person name="Lesur I."/>
            <person name="Ma L."/>
            <person name="Muller H."/>
            <person name="Nicaud J.-M."/>
            <person name="Nikolski M."/>
            <person name="Oztas S."/>
            <person name="Ozier-Kalogeropoulos O."/>
            <person name="Pellenz S."/>
            <person name="Potier S."/>
            <person name="Richard G.-F."/>
            <person name="Straub M.-L."/>
            <person name="Suleau A."/>
            <person name="Swennen D."/>
            <person name="Tekaia F."/>
            <person name="Wesolowski-Louvel M."/>
            <person name="Westhof E."/>
            <person name="Wirth B."/>
            <person name="Zeniou-Meyer M."/>
            <person name="Zivanovic Y."/>
            <person name="Bolotin-Fukuhara M."/>
            <person name="Thierry A."/>
            <person name="Bouchier C."/>
            <person name="Caudron B."/>
            <person name="Scarpelli C."/>
            <person name="Gaillardin C."/>
            <person name="Weissenbach J."/>
            <person name="Wincker P."/>
            <person name="Souciet J.-L."/>
        </authorList>
    </citation>
    <scope>NUCLEOTIDE SEQUENCE [LARGE SCALE GENOMIC DNA]</scope>
    <source>
        <strain>ATCC 8585 / CBS 2359 / DSM 70799 / NBRC 1267 / NRRL Y-1140 / WM37</strain>
    </source>
</reference>